<feature type="chain" id="PRO_0000212940" description="Palmitoyltransferase ERF2">
    <location>
        <begin position="1"/>
        <end position="326"/>
    </location>
</feature>
<feature type="topological domain" description="Cytoplasmic" evidence="4">
    <location>
        <begin position="1"/>
        <end position="62"/>
    </location>
</feature>
<feature type="transmembrane region" description="Helical" evidence="4">
    <location>
        <begin position="63"/>
        <end position="83"/>
    </location>
</feature>
<feature type="topological domain" description="Lumenal" evidence="4">
    <location>
        <begin position="84"/>
        <end position="90"/>
    </location>
</feature>
<feature type="transmembrane region" description="Helical" evidence="4">
    <location>
        <begin position="91"/>
        <end position="111"/>
    </location>
</feature>
<feature type="topological domain" description="Cytoplasmic" evidence="4">
    <location>
        <begin position="112"/>
        <end position="202"/>
    </location>
</feature>
<feature type="transmembrane region" description="Helical" evidence="4">
    <location>
        <begin position="203"/>
        <end position="223"/>
    </location>
</feature>
<feature type="topological domain" description="Lumenal" evidence="4">
    <location>
        <begin position="224"/>
        <end position="241"/>
    </location>
</feature>
<feature type="transmembrane region" description="Helical" evidence="4">
    <location>
        <begin position="242"/>
        <end position="262"/>
    </location>
</feature>
<feature type="topological domain" description="Cytoplasmic" evidence="4">
    <location>
        <begin position="263"/>
        <end position="326"/>
    </location>
</feature>
<feature type="domain" description="DHHC" evidence="5">
    <location>
        <begin position="158"/>
        <end position="208"/>
    </location>
</feature>
<feature type="active site" description="S-palmitoyl cysteine intermediate" evidence="2">
    <location>
        <position position="188"/>
    </location>
</feature>
<keyword id="KW-0012">Acyltransferase</keyword>
<keyword id="KW-0256">Endoplasmic reticulum</keyword>
<keyword id="KW-0449">Lipoprotein</keyword>
<keyword id="KW-0472">Membrane</keyword>
<keyword id="KW-0564">Palmitate</keyword>
<keyword id="KW-1185">Reference proteome</keyword>
<keyword id="KW-0808">Transferase</keyword>
<keyword id="KW-0812">Transmembrane</keyword>
<keyword id="KW-1133">Transmembrane helix</keyword>
<protein>
    <recommendedName>
        <fullName>Palmitoyltransferase ERF2</fullName>
        <ecNumber evidence="2">2.3.1.225</ecNumber>
    </recommendedName>
    <alternativeName>
        <fullName>DHHC cysteine-rich domain-containing protein ERF2</fullName>
    </alternativeName>
    <alternativeName>
        <fullName>Ras protein acyltransferase</fullName>
    </alternativeName>
</protein>
<proteinExistence type="inferred from homology"/>
<accession>Q6FSS4</accession>
<reference key="1">
    <citation type="journal article" date="2004" name="Nature">
        <title>Genome evolution in yeasts.</title>
        <authorList>
            <person name="Dujon B."/>
            <person name="Sherman D."/>
            <person name="Fischer G."/>
            <person name="Durrens P."/>
            <person name="Casaregola S."/>
            <person name="Lafontaine I."/>
            <person name="de Montigny J."/>
            <person name="Marck C."/>
            <person name="Neuveglise C."/>
            <person name="Talla E."/>
            <person name="Goffard N."/>
            <person name="Frangeul L."/>
            <person name="Aigle M."/>
            <person name="Anthouard V."/>
            <person name="Babour A."/>
            <person name="Barbe V."/>
            <person name="Barnay S."/>
            <person name="Blanchin S."/>
            <person name="Beckerich J.-M."/>
            <person name="Beyne E."/>
            <person name="Bleykasten C."/>
            <person name="Boisrame A."/>
            <person name="Boyer J."/>
            <person name="Cattolico L."/>
            <person name="Confanioleri F."/>
            <person name="de Daruvar A."/>
            <person name="Despons L."/>
            <person name="Fabre E."/>
            <person name="Fairhead C."/>
            <person name="Ferry-Dumazet H."/>
            <person name="Groppi A."/>
            <person name="Hantraye F."/>
            <person name="Hennequin C."/>
            <person name="Jauniaux N."/>
            <person name="Joyet P."/>
            <person name="Kachouri R."/>
            <person name="Kerrest A."/>
            <person name="Koszul R."/>
            <person name="Lemaire M."/>
            <person name="Lesur I."/>
            <person name="Ma L."/>
            <person name="Muller H."/>
            <person name="Nicaud J.-M."/>
            <person name="Nikolski M."/>
            <person name="Oztas S."/>
            <person name="Ozier-Kalogeropoulos O."/>
            <person name="Pellenz S."/>
            <person name="Potier S."/>
            <person name="Richard G.-F."/>
            <person name="Straub M.-L."/>
            <person name="Suleau A."/>
            <person name="Swennen D."/>
            <person name="Tekaia F."/>
            <person name="Wesolowski-Louvel M."/>
            <person name="Westhof E."/>
            <person name="Wirth B."/>
            <person name="Zeniou-Meyer M."/>
            <person name="Zivanovic Y."/>
            <person name="Bolotin-Fukuhara M."/>
            <person name="Thierry A."/>
            <person name="Bouchier C."/>
            <person name="Caudron B."/>
            <person name="Scarpelli C."/>
            <person name="Gaillardin C."/>
            <person name="Weissenbach J."/>
            <person name="Wincker P."/>
            <person name="Souciet J.-L."/>
        </authorList>
    </citation>
    <scope>NUCLEOTIDE SEQUENCE [LARGE SCALE GENOMIC DNA]</scope>
    <source>
        <strain>ATCC 2001 / BCRC 20586 / JCM 3761 / NBRC 0622 / NRRL Y-65 / CBS 138</strain>
    </source>
</reference>
<name>ERFB_CANGA</name>
<organism>
    <name type="scientific">Candida glabrata (strain ATCC 2001 / BCRC 20586 / JCM 3761 / NBRC 0622 / NRRL Y-65 / CBS 138)</name>
    <name type="common">Yeast</name>
    <name type="synonym">Nakaseomyces glabratus</name>
    <dbReference type="NCBI Taxonomy" id="284593"/>
    <lineage>
        <taxon>Eukaryota</taxon>
        <taxon>Fungi</taxon>
        <taxon>Dikarya</taxon>
        <taxon>Ascomycota</taxon>
        <taxon>Saccharomycotina</taxon>
        <taxon>Saccharomycetes</taxon>
        <taxon>Saccharomycetales</taxon>
        <taxon>Saccharomycetaceae</taxon>
        <taxon>Nakaseomyces</taxon>
    </lineage>
</organism>
<sequence>MKGNPSTHEVIGTMSTRRFYRWLITIDGDTEINYRNYEELPSRSNYIFFFGGRLRAVKTARPFSLVVLFLILSPMVLFSVFEAHRLWHTRYGYKALVVLFYYAWAWSLLSFTKTATSDPGVLPRNIHMHKDTPQEYFNNVTLPYGAGGSAGNASVTLKYCHTCKIWRPPRASHCSVCECCVLTHDHHCIWVNNCVGQRNYRYFLAFLLSSTLACALLIANCALHLHRALHEGIRVSHRPLPVAVLLCVYAAVLCVYPVILLGYHVAMSGTQQTTREYLRSIGFRNPVMHRIRRRRDNPYAEHGFLRNMLDLMAEPRGPRSCNYRYR</sequence>
<dbReference type="EC" id="2.3.1.225" evidence="2"/>
<dbReference type="EMBL" id="CR380953">
    <property type="protein sequence ID" value="CAG59647.1"/>
    <property type="molecule type" value="Genomic_DNA"/>
</dbReference>
<dbReference type="RefSeq" id="XP_446720.1">
    <property type="nucleotide sequence ID" value="XM_446720.1"/>
</dbReference>
<dbReference type="SMR" id="Q6FSS4"/>
<dbReference type="FunCoup" id="Q6FSS4">
    <property type="interactions" value="192"/>
</dbReference>
<dbReference type="STRING" id="284593.Q6FSS4"/>
<dbReference type="EnsemblFungi" id="CAGL0G08217g-T">
    <property type="protein sequence ID" value="CAGL0G08217g-T-p1"/>
    <property type="gene ID" value="CAGL0G08217g"/>
</dbReference>
<dbReference type="KEGG" id="cgr:2888209"/>
<dbReference type="CGD" id="CAL0130306">
    <property type="gene designation" value="CAGL0G08217g"/>
</dbReference>
<dbReference type="VEuPathDB" id="FungiDB:CAGL0G08217g"/>
<dbReference type="eggNOG" id="KOG1311">
    <property type="taxonomic scope" value="Eukaryota"/>
</dbReference>
<dbReference type="HOGENOM" id="CLU_047581_0_0_1"/>
<dbReference type="InParanoid" id="Q6FSS4"/>
<dbReference type="Proteomes" id="UP000002428">
    <property type="component" value="Chromosome G"/>
</dbReference>
<dbReference type="GO" id="GO:0005789">
    <property type="term" value="C:endoplasmic reticulum membrane"/>
    <property type="evidence" value="ECO:0007669"/>
    <property type="project" value="UniProtKB-SubCell"/>
</dbReference>
<dbReference type="GO" id="GO:0005794">
    <property type="term" value="C:Golgi apparatus"/>
    <property type="evidence" value="ECO:0007669"/>
    <property type="project" value="TreeGrafter"/>
</dbReference>
<dbReference type="GO" id="GO:0019706">
    <property type="term" value="F:protein-cysteine S-palmitoyltransferase activity"/>
    <property type="evidence" value="ECO:0007669"/>
    <property type="project" value="UniProtKB-EC"/>
</dbReference>
<dbReference type="GO" id="GO:0006612">
    <property type="term" value="P:protein targeting to membrane"/>
    <property type="evidence" value="ECO:0007669"/>
    <property type="project" value="TreeGrafter"/>
</dbReference>
<dbReference type="InterPro" id="IPR001594">
    <property type="entry name" value="Palmitoyltrfase_DHHC"/>
</dbReference>
<dbReference type="InterPro" id="IPR039859">
    <property type="entry name" value="PFA4/ZDH16/20/ERF2-like"/>
</dbReference>
<dbReference type="PANTHER" id="PTHR22883:SF43">
    <property type="entry name" value="PALMITOYLTRANSFERASE APP"/>
    <property type="match status" value="1"/>
</dbReference>
<dbReference type="PANTHER" id="PTHR22883">
    <property type="entry name" value="ZINC FINGER DHHC DOMAIN CONTAINING PROTEIN"/>
    <property type="match status" value="1"/>
</dbReference>
<dbReference type="Pfam" id="PF01529">
    <property type="entry name" value="DHHC"/>
    <property type="match status" value="1"/>
</dbReference>
<dbReference type="PROSITE" id="PS50216">
    <property type="entry name" value="DHHC"/>
    <property type="match status" value="1"/>
</dbReference>
<gene>
    <name type="primary">ERF2</name>
    <name type="ordered locus">CAGL0G08217g</name>
</gene>
<evidence type="ECO:0000250" key="1">
    <source>
        <dbReference type="UniProtKB" id="Q06551"/>
    </source>
</evidence>
<evidence type="ECO:0000250" key="2">
    <source>
        <dbReference type="UniProtKB" id="Q8VDZ4"/>
    </source>
</evidence>
<evidence type="ECO:0000250" key="3">
    <source>
        <dbReference type="UniProtKB" id="Q9UIJ5"/>
    </source>
</evidence>
<evidence type="ECO:0000255" key="4"/>
<evidence type="ECO:0000255" key="5">
    <source>
        <dbReference type="PROSITE-ProRule" id="PRU00067"/>
    </source>
</evidence>
<evidence type="ECO:0000305" key="6"/>
<comment type="function">
    <text evidence="1">The ERF2-ERF4 complex is a palmitoyltransferase specific for Ras proteins.</text>
</comment>
<comment type="catalytic activity">
    <reaction evidence="2">
        <text>L-cysteinyl-[protein] + hexadecanoyl-CoA = S-hexadecanoyl-L-cysteinyl-[protein] + CoA</text>
        <dbReference type="Rhea" id="RHEA:36683"/>
        <dbReference type="Rhea" id="RHEA-COMP:10131"/>
        <dbReference type="Rhea" id="RHEA-COMP:11032"/>
        <dbReference type="ChEBI" id="CHEBI:29950"/>
        <dbReference type="ChEBI" id="CHEBI:57287"/>
        <dbReference type="ChEBI" id="CHEBI:57379"/>
        <dbReference type="ChEBI" id="CHEBI:74151"/>
        <dbReference type="EC" id="2.3.1.225"/>
    </reaction>
</comment>
<comment type="subunit">
    <text evidence="1">Interacts with ERF4.</text>
</comment>
<comment type="subcellular location">
    <subcellularLocation>
        <location evidence="1">Endoplasmic reticulum membrane</location>
        <topology evidence="1">Multi-pass membrane protein</topology>
    </subcellularLocation>
</comment>
<comment type="domain">
    <text evidence="1">The DHHC domain is required for palmitoyltransferase activity.</text>
</comment>
<comment type="PTM">
    <text evidence="3">Autopalmitoylated.</text>
</comment>
<comment type="similarity">
    <text evidence="6">Belongs to the DHHC palmitoyltransferase family. ERF2/ZDHHC9 subfamily.</text>
</comment>